<reference key="1">
    <citation type="journal article" date="2010" name="BMC Genomics">
        <title>Comparative venom gland transcriptome analysis of the scorpion Lychas mucronatus reveals intraspecific toxic gene diversity and new venomous components.</title>
        <authorList>
            <person name="Zhao R."/>
            <person name="Ma Y."/>
            <person name="He Y."/>
            <person name="Di Z."/>
            <person name="Wu Y.-L."/>
            <person name="Cao Z.-J."/>
            <person name="Li W.-X."/>
        </authorList>
    </citation>
    <scope>NUCLEOTIDE SEQUENCE [MRNA]</scope>
    <source>
        <strain>Yunnan</strain>
        <tissue>Venom gland</tissue>
    </source>
</reference>
<evidence type="ECO:0000250" key="1"/>
<evidence type="ECO:0000255" key="2"/>
<evidence type="ECO:0000305" key="3"/>
<proteinExistence type="inferred from homology"/>
<sequence length="99" mass="9707">MKSMIAVLLLALVATSMAGYLGLGYGGLYGAYGGLYGAGVPVGRAVAYSSSIRHPGFGGLGVLGGYGGYGYGLGLGAYGYGGYGLGYGLGLGLGHGKIW</sequence>
<accession>P0CI94</accession>
<feature type="signal peptide" evidence="2">
    <location>
        <begin position="1"/>
        <end position="18"/>
    </location>
</feature>
<feature type="chain" id="PRO_0000403874" description="Glycine-rich protein">
    <location>
        <begin position="19"/>
        <end position="99"/>
    </location>
</feature>
<name>NDBG1_LYCMC</name>
<organism>
    <name type="scientific">Lychas mucronatus</name>
    <name type="common">Chinese swimming scorpion</name>
    <dbReference type="NCBI Taxonomy" id="172552"/>
    <lineage>
        <taxon>Eukaryota</taxon>
        <taxon>Metazoa</taxon>
        <taxon>Ecdysozoa</taxon>
        <taxon>Arthropoda</taxon>
        <taxon>Chelicerata</taxon>
        <taxon>Arachnida</taxon>
        <taxon>Scorpiones</taxon>
        <taxon>Buthida</taxon>
        <taxon>Buthoidea</taxon>
        <taxon>Buthidae</taxon>
        <taxon>Lychas</taxon>
    </lineage>
</organism>
<keyword id="KW-0964">Secreted</keyword>
<keyword id="KW-0732">Signal</keyword>
<dbReference type="EMBL" id="GT029072">
    <property type="status" value="NOT_ANNOTATED_CDS"/>
    <property type="molecule type" value="mRNA"/>
</dbReference>
<dbReference type="GO" id="GO:0005576">
    <property type="term" value="C:extracellular region"/>
    <property type="evidence" value="ECO:0007669"/>
    <property type="project" value="UniProtKB-SubCell"/>
</dbReference>
<comment type="subcellular location">
    <subcellularLocation>
        <location evidence="1">Secreted</location>
    </subcellularLocation>
</comment>
<comment type="tissue specificity">
    <text evidence="3">Expressed by the venom gland.</text>
</comment>
<comment type="similarity">
    <text evidence="3">Belongs to the non-disulfide-bridged peptide (NDBP) superfamily.</text>
</comment>
<protein>
    <recommendedName>
        <fullName>Glycine-rich protein</fullName>
    </recommendedName>
</protein>